<gene>
    <name type="primary">flgB</name>
</gene>
<sequence length="135" mass="15503">MNIFEMSVDLAHRYLDVLSLRQSVIADNIANVDTPNFKRSKVTFEAELERAILNERASNLSLIRGNDKNLNGFKELGYLDVKPSRMLDYLSILKNDGNNVDIDSEMKNLIQNQMIYSLFTNIQAHHFKSVNIVIK</sequence>
<accession>P70910</accession>
<feature type="chain" id="PRO_0000180786" description="Flagellar basal body rod protein FlgB">
    <location>
        <begin position="1"/>
        <end position="135"/>
    </location>
</feature>
<keyword id="KW-0975">Bacterial flagellum</keyword>
<dbReference type="EMBL" id="U71301">
    <property type="protein sequence ID" value="AAB51473.1"/>
    <property type="molecule type" value="Genomic_DNA"/>
</dbReference>
<dbReference type="SMR" id="P70910"/>
<dbReference type="STRING" id="140.A0V01_02865"/>
<dbReference type="eggNOG" id="COG1815">
    <property type="taxonomic scope" value="Bacteria"/>
</dbReference>
<dbReference type="GO" id="GO:0030694">
    <property type="term" value="C:bacterial-type flagellum basal body, rod"/>
    <property type="evidence" value="ECO:0007669"/>
    <property type="project" value="InterPro"/>
</dbReference>
<dbReference type="GO" id="GO:0071978">
    <property type="term" value="P:bacterial-type flagellum-dependent swarming motility"/>
    <property type="evidence" value="ECO:0007669"/>
    <property type="project" value="TreeGrafter"/>
</dbReference>
<dbReference type="InterPro" id="IPR001444">
    <property type="entry name" value="Flag_bb_rod_N"/>
</dbReference>
<dbReference type="InterPro" id="IPR019776">
    <property type="entry name" value="Flagellar_basal_body_rod_CS"/>
</dbReference>
<dbReference type="InterPro" id="IPR006300">
    <property type="entry name" value="FlgB"/>
</dbReference>
<dbReference type="NCBIfam" id="TIGR01396">
    <property type="entry name" value="FlgB"/>
    <property type="match status" value="1"/>
</dbReference>
<dbReference type="NCBIfam" id="NF009265">
    <property type="entry name" value="PRK12622.1"/>
    <property type="match status" value="1"/>
</dbReference>
<dbReference type="PANTHER" id="PTHR30435:SF12">
    <property type="entry name" value="FLAGELLAR BASAL BODY ROD PROTEIN FLGB"/>
    <property type="match status" value="1"/>
</dbReference>
<dbReference type="PANTHER" id="PTHR30435">
    <property type="entry name" value="FLAGELLAR PROTEIN"/>
    <property type="match status" value="1"/>
</dbReference>
<dbReference type="Pfam" id="PF00460">
    <property type="entry name" value="Flg_bb_rod"/>
    <property type="match status" value="1"/>
</dbReference>
<dbReference type="PIRSF" id="PIRSF002889">
    <property type="entry name" value="Rod_FlgB"/>
    <property type="match status" value="1"/>
</dbReference>
<dbReference type="PROSITE" id="PS00588">
    <property type="entry name" value="FLAGELLA_BB_ROD"/>
    <property type="match status" value="1"/>
</dbReference>
<proteinExistence type="inferred from homology"/>
<comment type="function">
    <text evidence="1">Structural component of flagellum, the bacterial motility apparatus. Part of the rod structure of flagellar basal body (By similarity).</text>
</comment>
<comment type="subunit">
    <text evidence="1">The basal body constitutes a major portion of the flagellar organelle and consists of a number of rings mounted on a central rod. In Gram-negative bacteria, at least four rings, L, P, S and M are present, whereas Gram-positive bacteria lack the L and P rings. The rod consists of about 26 subunits of FlgG in the distal portion, and FlgB, FlgC and FlgF build up the proximal portion of the rod with about 6 subunits each. Rod assembly occurs by export via the flagellum-specific pathway of its constituent proteins and by their incorporation into the rod structure in the probable order of FlgB, FlgC, FlgF and FlgG. Another protein, FliE, also assembles onto the stable rod structure (By similarity).</text>
</comment>
<comment type="subcellular location">
    <subcellularLocation>
        <location evidence="1">Bacterial flagellum basal body</location>
    </subcellularLocation>
</comment>
<comment type="similarity">
    <text evidence="2">Belongs to the flagella basal body rod proteins family.</text>
</comment>
<organism>
    <name type="scientific">Borrelia hermsii</name>
    <dbReference type="NCBI Taxonomy" id="140"/>
    <lineage>
        <taxon>Bacteria</taxon>
        <taxon>Pseudomonadati</taxon>
        <taxon>Spirochaetota</taxon>
        <taxon>Spirochaetia</taxon>
        <taxon>Spirochaetales</taxon>
        <taxon>Borreliaceae</taxon>
        <taxon>Borrelia</taxon>
    </lineage>
</organism>
<reference key="1">
    <citation type="submission" date="1996-10" db="EMBL/GenBank/DDBJ databases">
        <authorList>
            <person name="Ge Y."/>
            <person name="Old I.G."/>
            <person name="Saint-Girons I."/>
            <person name="Charon N.W."/>
        </authorList>
    </citation>
    <scope>NUCLEOTIDE SEQUENCE [GENOMIC DNA]</scope>
    <source>
        <strain>SH1</strain>
    </source>
</reference>
<name>FLGB_BORHE</name>
<protein>
    <recommendedName>
        <fullName>Flagellar basal body rod protein FlgB</fullName>
    </recommendedName>
</protein>
<evidence type="ECO:0000250" key="1"/>
<evidence type="ECO:0000305" key="2"/>